<feature type="chain" id="PRO_0000185715" description="Cellular tumor antigen p53">
    <location>
        <begin position="1"/>
        <end position="393"/>
    </location>
</feature>
<feature type="DNA-binding region" evidence="3">
    <location>
        <begin position="102"/>
        <end position="292"/>
    </location>
</feature>
<feature type="region of interest" description="Interaction with CCAR2" evidence="3">
    <location>
        <begin position="1"/>
        <end position="320"/>
    </location>
</feature>
<feature type="region of interest" description="Interaction with HRMT1L2" evidence="1">
    <location>
        <begin position="1"/>
        <end position="83"/>
    </location>
</feature>
<feature type="region of interest" description="Transcription activation (acidic)">
    <location>
        <begin position="1"/>
        <end position="44"/>
    </location>
</feature>
<feature type="region of interest" description="Disordered" evidence="5">
    <location>
        <begin position="50"/>
        <end position="96"/>
    </location>
</feature>
<feature type="region of interest" description="Interaction with WWOX" evidence="1">
    <location>
        <begin position="66"/>
        <end position="110"/>
    </location>
</feature>
<feature type="region of interest" description="Interaction with HIPK1" evidence="1">
    <location>
        <begin position="100"/>
        <end position="370"/>
    </location>
</feature>
<feature type="region of interest" description="Required for interaction with ZNF385A" evidence="1">
    <location>
        <begin position="100"/>
        <end position="300"/>
    </location>
</feature>
<feature type="region of interest" description="Required for interaction with FBXO42" evidence="1">
    <location>
        <begin position="113"/>
        <end position="236"/>
    </location>
</feature>
<feature type="region of interest" description="Interaction with AXIN1" evidence="1">
    <location>
        <begin position="116"/>
        <end position="292"/>
    </location>
</feature>
<feature type="region of interest" description="Interaction with E4F1" evidence="1">
    <location>
        <begin position="256"/>
        <end position="294"/>
    </location>
</feature>
<feature type="region of interest" description="Interaction with DNA" evidence="1">
    <location>
        <begin position="273"/>
        <end position="280"/>
    </location>
</feature>
<feature type="region of interest" description="Disordered" evidence="5">
    <location>
        <begin position="283"/>
        <end position="325"/>
    </location>
</feature>
<feature type="region of interest" description="Interaction with CARM1" evidence="1">
    <location>
        <begin position="300"/>
        <end position="393"/>
    </location>
</feature>
<feature type="region of interest" description="Interaction with HIPK2" evidence="1">
    <location>
        <begin position="319"/>
        <end position="360"/>
    </location>
</feature>
<feature type="region of interest" description="Oligomerization">
    <location>
        <begin position="325"/>
        <end position="356"/>
    </location>
</feature>
<feature type="region of interest" description="Disordered" evidence="5">
    <location>
        <begin position="354"/>
        <end position="393"/>
    </location>
</feature>
<feature type="region of interest" description="Interaction with USP7" evidence="1">
    <location>
        <begin position="357"/>
        <end position="383"/>
    </location>
</feature>
<feature type="region of interest" description="Basic (repression of DNA-binding)">
    <location>
        <begin position="368"/>
        <end position="387"/>
    </location>
</feature>
<feature type="short sequence motif" description="Bipartite nuclear localization signal" evidence="1">
    <location>
        <begin position="305"/>
        <end position="321"/>
    </location>
</feature>
<feature type="short sequence motif" description="Nuclear export signal" evidence="1">
    <location>
        <begin position="339"/>
        <end position="350"/>
    </location>
</feature>
<feature type="short sequence motif" description="[KR]-[STA]-K motif">
    <location>
        <begin position="370"/>
        <end position="372"/>
    </location>
</feature>
<feature type="compositionally biased region" description="Pro residues" evidence="5">
    <location>
        <begin position="69"/>
        <end position="90"/>
    </location>
</feature>
<feature type="compositionally biased region" description="Basic and acidic residues" evidence="5">
    <location>
        <begin position="283"/>
        <end position="295"/>
    </location>
</feature>
<feature type="compositionally biased region" description="Basic residues" evidence="5">
    <location>
        <begin position="365"/>
        <end position="384"/>
    </location>
</feature>
<feature type="binding site" evidence="3">
    <location>
        <position position="176"/>
    </location>
    <ligand>
        <name>Zn(2+)</name>
        <dbReference type="ChEBI" id="CHEBI:29105"/>
    </ligand>
</feature>
<feature type="binding site" evidence="3">
    <location>
        <position position="179"/>
    </location>
    <ligand>
        <name>Zn(2+)</name>
        <dbReference type="ChEBI" id="CHEBI:29105"/>
    </ligand>
</feature>
<feature type="binding site" evidence="3">
    <location>
        <position position="238"/>
    </location>
    <ligand>
        <name>Zn(2+)</name>
        <dbReference type="ChEBI" id="CHEBI:29105"/>
    </ligand>
</feature>
<feature type="binding site" evidence="3">
    <location>
        <position position="242"/>
    </location>
    <ligand>
        <name>Zn(2+)</name>
        <dbReference type="ChEBI" id="CHEBI:29105"/>
    </ligand>
</feature>
<feature type="site" description="Interaction with DNA" evidence="3">
    <location>
        <position position="120"/>
    </location>
</feature>
<feature type="modified residue" description="Phosphoserine; by HIPK4" evidence="3">
    <location>
        <position position="9"/>
    </location>
</feature>
<feature type="modified residue" description="Phosphoserine; by CDK5, PRPK, AMPK, NUAK1 and ATM" evidence="3">
    <location>
        <position position="15"/>
    </location>
</feature>
<feature type="modified residue" description="Phosphothreonine; by CK1, VRK1 and VRK2" evidence="3">
    <location>
        <position position="18"/>
    </location>
</feature>
<feature type="modified residue" description="Phosphoserine; by CHEK2, CK1 and PLK3" evidence="3">
    <location>
        <position position="20"/>
    </location>
</feature>
<feature type="modified residue" description="Phosphoserine; by CDK5 and CDK7" evidence="3">
    <location>
        <position position="33"/>
    </location>
</feature>
<feature type="modified residue" description="Phosphoserine; by MAPKAPK5" evidence="3">
    <location>
        <position position="37"/>
    </location>
</feature>
<feature type="modified residue" description="Phosphoserine; by CDK5, DYRK2, HIPK2 and PKC/PRKCG" evidence="3">
    <location>
        <position position="46"/>
    </location>
</feature>
<feature type="modified residue" description="Phosphothreonine; by TAF1" evidence="1">
    <location>
        <position position="55"/>
    </location>
</feature>
<feature type="modified residue" description="Phosphothreonine; by TAF1 and GRK5" evidence="1">
    <location>
        <position position="55"/>
    </location>
</feature>
<feature type="modified residue" description="N6-acetyllysine" evidence="3">
    <location>
        <position position="120"/>
    </location>
</feature>
<feature type="modified residue" description="N6-lactoyllysine" evidence="3">
    <location>
        <position position="120"/>
    </location>
</feature>
<feature type="modified residue" description="N6-lactoyllysine" evidence="3">
    <location>
        <position position="139"/>
    </location>
</feature>
<feature type="modified residue" description="Phosphoserine" evidence="3">
    <location>
        <position position="183"/>
    </location>
</feature>
<feature type="modified residue" description="Phosphoserine" evidence="3">
    <location>
        <position position="269"/>
    </location>
</feature>
<feature type="modified residue" description="Phosphothreonine" evidence="3">
    <location>
        <position position="284"/>
    </location>
</feature>
<feature type="modified residue" description="N6-acetyllysine" evidence="3">
    <location>
        <position position="305"/>
    </location>
</feature>
<feature type="modified residue" description="Phosphoserine; by AURKA, CDK1 and CDK2" evidence="3">
    <location>
        <position position="315"/>
    </location>
</feature>
<feature type="modified residue" description="N6-acetyllysine" evidence="2">
    <location>
        <position position="321"/>
    </location>
</feature>
<feature type="modified residue" description="Omega-N-methylarginine" evidence="3">
    <location>
        <position position="333"/>
    </location>
</feature>
<feature type="modified residue" description="Symmetric dimethylarginine" evidence="3">
    <location>
        <position position="335"/>
    </location>
</feature>
<feature type="modified residue" description="Symmetric dimethylarginine" evidence="3">
    <location>
        <position position="337"/>
    </location>
</feature>
<feature type="modified residue" description="N6,N6-dimethyllysine; alternate" evidence="3">
    <location>
        <position position="370"/>
    </location>
</feature>
<feature type="modified residue" description="N6-methyllysine; by SMYD2; alternate" evidence="3">
    <location>
        <position position="370"/>
    </location>
</feature>
<feature type="modified residue" description="N6-methyllysine; by SETD7" evidence="3">
    <location>
        <position position="372"/>
    </location>
</feature>
<feature type="modified residue" description="N6,N6-dimethyllysine; by EHMT1 and EHMT2; alternate" evidence="3">
    <location>
        <position position="373"/>
    </location>
</feature>
<feature type="modified residue" description="N6-acetyllysine; alternate" evidence="3">
    <location>
        <position position="373"/>
    </location>
</feature>
<feature type="modified residue" description="N6,N6-dimethyllysine; alternate" evidence="3">
    <location>
        <position position="382"/>
    </location>
</feature>
<feature type="modified residue" description="N6-acetyllysine; alternate" evidence="3">
    <location>
        <position position="382"/>
    </location>
</feature>
<feature type="modified residue" description="N6-methyllysine; by KMT5A; alternate" evidence="3">
    <location>
        <position position="382"/>
    </location>
</feature>
<feature type="modified residue" description="Phosphoserine; by CK2, CDK2 and NUAK1" evidence="3">
    <location>
        <position position="392"/>
    </location>
</feature>
<feature type="cross-link" description="Glycyl lysine isopeptide (Lys-Gly) (interchain with G-Cter in ubiquitin)" evidence="3">
    <location>
        <position position="24"/>
    </location>
</feature>
<feature type="cross-link" description="Glycyl lysine isopeptide (Lys-Gly) (interchain with G-Cter in ubiquitin)" evidence="3">
    <location>
        <position position="291"/>
    </location>
</feature>
<feature type="cross-link" description="Glycyl lysine isopeptide (Lys-Gly) (interchain with G-Cter in ubiquitin)" evidence="3">
    <location>
        <position position="292"/>
    </location>
</feature>
<feature type="cross-link" description="Glycyl lysine isopeptide (Lys-Gly) (interchain with G-Cter in ubiquitin)" evidence="3">
    <location>
        <position position="351"/>
    </location>
</feature>
<feature type="cross-link" description="Glycyl lysine isopeptide (Lys-Gly) (interchain with G-Cter in ubiquitin)" evidence="3">
    <location>
        <position position="357"/>
    </location>
</feature>
<feature type="cross-link" description="Glycyl lysine isopeptide (Lys-Gly) (interchain with G-Cter in SUMO)" evidence="1">
    <location>
        <position position="386"/>
    </location>
</feature>
<evidence type="ECO:0000250" key="1"/>
<evidence type="ECO:0000250" key="2">
    <source>
        <dbReference type="UniProtKB" id="P02340"/>
    </source>
</evidence>
<evidence type="ECO:0000250" key="3">
    <source>
        <dbReference type="UniProtKB" id="P04637"/>
    </source>
</evidence>
<evidence type="ECO:0000250" key="4">
    <source>
        <dbReference type="UniProtKB" id="P10361"/>
    </source>
</evidence>
<evidence type="ECO:0000256" key="5">
    <source>
        <dbReference type="SAM" id="MobiDB-lite"/>
    </source>
</evidence>
<evidence type="ECO:0000305" key="6"/>
<keyword id="KW-0007">Acetylation</keyword>
<keyword id="KW-0010">Activator</keyword>
<keyword id="KW-0053">Apoptosis</keyword>
<keyword id="KW-0090">Biological rhythms</keyword>
<keyword id="KW-0131">Cell cycle</keyword>
<keyword id="KW-0963">Cytoplasm</keyword>
<keyword id="KW-0206">Cytoskeleton</keyword>
<keyword id="KW-0238">DNA-binding</keyword>
<keyword id="KW-0256">Endoplasmic reticulum</keyword>
<keyword id="KW-1017">Isopeptide bond</keyword>
<keyword id="KW-0479">Metal-binding</keyword>
<keyword id="KW-0488">Methylation</keyword>
<keyword id="KW-0496">Mitochondrion</keyword>
<keyword id="KW-1210">Necrosis</keyword>
<keyword id="KW-0539">Nucleus</keyword>
<keyword id="KW-0597">Phosphoprotein</keyword>
<keyword id="KW-0678">Repressor</keyword>
<keyword id="KW-0804">Transcription</keyword>
<keyword id="KW-0805">Transcription regulation</keyword>
<keyword id="KW-0043">Tumor suppressor</keyword>
<keyword id="KW-0832">Ubl conjugation</keyword>
<keyword id="KW-0862">Zinc</keyword>
<sequence length="393" mass="43552">MEEPQSDPSVEPPLSQETFSDLWKLLPENNVLSPLPSQAMDDLMLSPDDIEQWFTEDPGPDEAPRMPEAAPPVAPAPAAPTPAAPAPAPSWPLSSSVPSQKTYQGSYGFRLGFLHSGTAKSVTCTYSPDLNKLFCQLAKTCPVQLWVDSAPPPGTRVRAMAIYKQSQYVTEVVRRCPHHERCSDSDGLAPPQHLIRVEGNLHAEYSDDRNTFRHSVVVPYEPPEVGSDCTTIHYNYMCNSSCMGGMNRRPILTIITLEDSSGKLLGRNSFEVRICACPGRDRRTEEENFRKKGESCPKLPTGSIKRALPTGSSSSPQPKKKPLDEEYFTLQIRGRERFEMLREINEALELKDAMAGKESAGSRAHSSHLKSKKGQSTSRHRKLMFKTEGPDSD</sequence>
<name>P53_TUPBE</name>
<accession>Q9TTA1</accession>
<organism>
    <name type="scientific">Tupaia belangeri</name>
    <name type="common">Common tree shrew</name>
    <name type="synonym">Tupaia glis belangeri</name>
    <dbReference type="NCBI Taxonomy" id="37347"/>
    <lineage>
        <taxon>Eukaryota</taxon>
        <taxon>Metazoa</taxon>
        <taxon>Chordata</taxon>
        <taxon>Craniata</taxon>
        <taxon>Vertebrata</taxon>
        <taxon>Euteleostomi</taxon>
        <taxon>Mammalia</taxon>
        <taxon>Eutheria</taxon>
        <taxon>Euarchontoglires</taxon>
        <taxon>Scandentia</taxon>
        <taxon>Tupaiidae</taxon>
        <taxon>Tupaia</taxon>
    </lineage>
</organism>
<protein>
    <recommendedName>
        <fullName>Cellular tumor antigen p53</fullName>
    </recommendedName>
    <alternativeName>
        <fullName>Tumor suppressor p53</fullName>
    </alternativeName>
</protein>
<proteinExistence type="evidence at transcript level"/>
<reference key="1">
    <citation type="submission" date="1999-08" db="EMBL/GenBank/DDBJ databases">
        <title>Wild-type p53 sequence of tree shrews.</title>
        <authorList>
            <person name="Park U."/>
            <person name="Lee Y."/>
        </authorList>
    </citation>
    <scope>NUCLEOTIDE SEQUENCE [MRNA]</scope>
    <source>
        <strain>Chinensis</strain>
        <tissue>Liver</tissue>
    </source>
</reference>
<dbReference type="EMBL" id="AF175893">
    <property type="protein sequence ID" value="AAF22640.1"/>
    <property type="molecule type" value="mRNA"/>
</dbReference>
<dbReference type="BMRB" id="Q9TTA1"/>
<dbReference type="SMR" id="Q9TTA1"/>
<dbReference type="KEGG" id="tup:102503238"/>
<dbReference type="GO" id="GO:0005813">
    <property type="term" value="C:centrosome"/>
    <property type="evidence" value="ECO:0000250"/>
    <property type="project" value="UniProtKB"/>
</dbReference>
<dbReference type="GO" id="GO:0005737">
    <property type="term" value="C:cytoplasm"/>
    <property type="evidence" value="ECO:0000250"/>
    <property type="project" value="UniProtKB"/>
</dbReference>
<dbReference type="GO" id="GO:0005783">
    <property type="term" value="C:endoplasmic reticulum"/>
    <property type="evidence" value="ECO:0007669"/>
    <property type="project" value="UniProtKB-SubCell"/>
</dbReference>
<dbReference type="GO" id="GO:0005759">
    <property type="term" value="C:mitochondrial matrix"/>
    <property type="evidence" value="ECO:0007669"/>
    <property type="project" value="UniProtKB-SubCell"/>
</dbReference>
<dbReference type="GO" id="GO:0005739">
    <property type="term" value="C:mitochondrion"/>
    <property type="evidence" value="ECO:0000250"/>
    <property type="project" value="UniProtKB"/>
</dbReference>
<dbReference type="GO" id="GO:0005730">
    <property type="term" value="C:nucleolus"/>
    <property type="evidence" value="ECO:0000250"/>
    <property type="project" value="UniProtKB"/>
</dbReference>
<dbReference type="GO" id="GO:0005634">
    <property type="term" value="C:nucleus"/>
    <property type="evidence" value="ECO:0000250"/>
    <property type="project" value="UniProtKB"/>
</dbReference>
<dbReference type="GO" id="GO:0016605">
    <property type="term" value="C:PML body"/>
    <property type="evidence" value="ECO:0007669"/>
    <property type="project" value="UniProtKB-SubCell"/>
</dbReference>
<dbReference type="GO" id="GO:0036310">
    <property type="term" value="F:ATP-dependent DNA/DNA annealing activity"/>
    <property type="evidence" value="ECO:0000250"/>
    <property type="project" value="UniProtKB"/>
</dbReference>
<dbReference type="GO" id="GO:0005507">
    <property type="term" value="F:copper ion binding"/>
    <property type="evidence" value="ECO:0000250"/>
    <property type="project" value="UniProtKB"/>
</dbReference>
<dbReference type="GO" id="GO:0003677">
    <property type="term" value="F:DNA binding"/>
    <property type="evidence" value="ECO:0000250"/>
    <property type="project" value="UniProtKB"/>
</dbReference>
<dbReference type="GO" id="GO:0000981">
    <property type="term" value="F:DNA-binding transcription factor activity, RNA polymerase II-specific"/>
    <property type="evidence" value="ECO:0000250"/>
    <property type="project" value="UniProtKB"/>
</dbReference>
<dbReference type="GO" id="GO:0140693">
    <property type="term" value="F:molecular condensate scaffold activity"/>
    <property type="evidence" value="ECO:0000250"/>
    <property type="project" value="UniProtKB"/>
</dbReference>
<dbReference type="GO" id="GO:1990841">
    <property type="term" value="F:promoter-specific chromatin binding"/>
    <property type="evidence" value="ECO:0000250"/>
    <property type="project" value="UniProtKB"/>
</dbReference>
<dbReference type="GO" id="GO:0000978">
    <property type="term" value="F:RNA polymerase II cis-regulatory region sequence-specific DNA binding"/>
    <property type="evidence" value="ECO:0000250"/>
    <property type="project" value="UniProtKB"/>
</dbReference>
<dbReference type="GO" id="GO:0090398">
    <property type="term" value="P:cellular senescence"/>
    <property type="evidence" value="ECO:0000250"/>
    <property type="project" value="UniProtKB"/>
</dbReference>
<dbReference type="GO" id="GO:0048512">
    <property type="term" value="P:circadian behavior"/>
    <property type="evidence" value="ECO:0000250"/>
    <property type="project" value="UniProtKB"/>
</dbReference>
<dbReference type="GO" id="GO:0006974">
    <property type="term" value="P:DNA damage response"/>
    <property type="evidence" value="ECO:0000250"/>
    <property type="project" value="UniProtKB"/>
</dbReference>
<dbReference type="GO" id="GO:0043153">
    <property type="term" value="P:entrainment of circadian clock by photoperiod"/>
    <property type="evidence" value="ECO:0000250"/>
    <property type="project" value="UniProtKB"/>
</dbReference>
<dbReference type="GO" id="GO:0030308">
    <property type="term" value="P:negative regulation of cell growth"/>
    <property type="evidence" value="ECO:0000250"/>
    <property type="project" value="UniProtKB"/>
</dbReference>
<dbReference type="GO" id="GO:0045892">
    <property type="term" value="P:negative regulation of DNA-templated transcription"/>
    <property type="evidence" value="ECO:0000250"/>
    <property type="project" value="UniProtKB"/>
</dbReference>
<dbReference type="GO" id="GO:0006289">
    <property type="term" value="P:nucleotide-excision repair"/>
    <property type="evidence" value="ECO:0000250"/>
    <property type="project" value="UniProtKB"/>
</dbReference>
<dbReference type="GO" id="GO:0097252">
    <property type="term" value="P:oligodendrocyte apoptotic process"/>
    <property type="evidence" value="ECO:0000250"/>
    <property type="project" value="UniProtKB"/>
</dbReference>
<dbReference type="GO" id="GO:0043065">
    <property type="term" value="P:positive regulation of apoptotic process"/>
    <property type="evidence" value="ECO:0000250"/>
    <property type="project" value="UniProtKB"/>
</dbReference>
<dbReference type="GO" id="GO:0045944">
    <property type="term" value="P:positive regulation of transcription by RNA polymerase II"/>
    <property type="evidence" value="ECO:0000250"/>
    <property type="project" value="UniProtKB"/>
</dbReference>
<dbReference type="GO" id="GO:0051262">
    <property type="term" value="P:protein tetramerization"/>
    <property type="evidence" value="ECO:0007669"/>
    <property type="project" value="InterPro"/>
</dbReference>
<dbReference type="CDD" id="cd08367">
    <property type="entry name" value="P53"/>
    <property type="match status" value="1"/>
</dbReference>
<dbReference type="FunFam" id="2.60.40.720:FF:000003">
    <property type="entry name" value="Cellular tumor antigen p53"/>
    <property type="match status" value="1"/>
</dbReference>
<dbReference type="FunFam" id="4.10.170.10:FF:000003">
    <property type="entry name" value="Cellular tumor antigen p53"/>
    <property type="match status" value="1"/>
</dbReference>
<dbReference type="Gene3D" id="2.60.40.720">
    <property type="match status" value="1"/>
</dbReference>
<dbReference type="Gene3D" id="6.10.50.20">
    <property type="match status" value="1"/>
</dbReference>
<dbReference type="Gene3D" id="4.10.170.10">
    <property type="entry name" value="p53-like tetramerisation domain"/>
    <property type="match status" value="1"/>
</dbReference>
<dbReference type="InterPro" id="IPR008967">
    <property type="entry name" value="p53-like_TF_DNA-bd_sf"/>
</dbReference>
<dbReference type="InterPro" id="IPR012346">
    <property type="entry name" value="p53/RUNT-type_TF_DNA-bd_sf"/>
</dbReference>
<dbReference type="InterPro" id="IPR011615">
    <property type="entry name" value="p53_DNA-bd"/>
</dbReference>
<dbReference type="InterPro" id="IPR040926">
    <property type="entry name" value="p53_TAD2"/>
</dbReference>
<dbReference type="InterPro" id="IPR036674">
    <property type="entry name" value="p53_tetramer_sf"/>
</dbReference>
<dbReference type="InterPro" id="IPR010991">
    <property type="entry name" value="p53_tetrameristn"/>
</dbReference>
<dbReference type="InterPro" id="IPR013872">
    <property type="entry name" value="p53_transactivation_domain"/>
</dbReference>
<dbReference type="InterPro" id="IPR002117">
    <property type="entry name" value="p53_tumour_suppressor"/>
</dbReference>
<dbReference type="PANTHER" id="PTHR11447">
    <property type="entry name" value="CELLULAR TUMOR ANTIGEN P53"/>
    <property type="match status" value="1"/>
</dbReference>
<dbReference type="PANTHER" id="PTHR11447:SF6">
    <property type="entry name" value="CELLULAR TUMOR ANTIGEN P53"/>
    <property type="match status" value="1"/>
</dbReference>
<dbReference type="Pfam" id="PF00870">
    <property type="entry name" value="P53"/>
    <property type="match status" value="1"/>
</dbReference>
<dbReference type="Pfam" id="PF08563">
    <property type="entry name" value="P53_TAD"/>
    <property type="match status" value="1"/>
</dbReference>
<dbReference type="Pfam" id="PF07710">
    <property type="entry name" value="P53_tetramer"/>
    <property type="match status" value="1"/>
</dbReference>
<dbReference type="Pfam" id="PF18521">
    <property type="entry name" value="TAD2"/>
    <property type="match status" value="1"/>
</dbReference>
<dbReference type="PRINTS" id="PR00386">
    <property type="entry name" value="P53SUPPRESSR"/>
</dbReference>
<dbReference type="SUPFAM" id="SSF47719">
    <property type="entry name" value="p53 tetramerization domain"/>
    <property type="match status" value="1"/>
</dbReference>
<dbReference type="SUPFAM" id="SSF49417">
    <property type="entry name" value="p53-like transcription factors"/>
    <property type="match status" value="1"/>
</dbReference>
<dbReference type="PROSITE" id="PS00348">
    <property type="entry name" value="P53"/>
    <property type="match status" value="1"/>
</dbReference>
<gene>
    <name type="primary">TP53</name>
    <name type="synonym">P53</name>
</gene>
<comment type="function">
    <text evidence="2 3">Multifunctional transcription factor that induces cell cycle arrest, DNA repair or apoptosis upon binding to its target DNA sequence. Acts as a tumor suppressor in many tumor types; induces growth arrest or apoptosis depending on the physiological circumstances and cell type. Negatively regulates cell division by controlling expression of a set of genes required for this process. One of the activated genes is an inhibitor of cyclin-dependent kinases. Apoptosis induction seems to be mediated either by stimulation of BAX and FAS antigen expression, or by repression of Bcl-2 expression. Its pro-apoptotic activity is activated via its interaction with PPP1R13B/ASPP1 or TP53BP2/ASPP2 (By similarity). However, this activity is inhibited when the interaction with PPP1R13B/ASPP1 or TP53BP2/ASPP2 is displaced by PPP1R13L/iASPP (By similarity). In cooperation with mitochondrial PPIF is involved in activating oxidative stress-induced necrosis; the function is largely independent of transcription. Prevents CDK7 kinase activity when associated to CAK complex in response to DNA damage, thus stopping cell cycle progression. Induces the transcription of long intergenic non-coding RNA p21 (lincRNA-p21) and lincRNA-Mkln1. LincRNA-p21 participates in TP53-dependent transcriptional repression leading to apoptosis and seems to have an effect on cell-cycle regulation. Regulates the circadian clock by repressing CLOCK-ARNTL/BMAL1-mediated transcriptional activation of PER2.</text>
</comment>
<comment type="cofactor">
    <cofactor evidence="1">
        <name>Zn(2+)</name>
        <dbReference type="ChEBI" id="CHEBI:29105"/>
    </cofactor>
    <text evidence="1">Binds 1 zinc ion per subunit.</text>
</comment>
<comment type="subunit">
    <text evidence="2 3 4">Forms homodimers and homotetramers (By similarity). Binds DNA as a homotetramer. Interacts with AXIN1. Probably part of a complex consisting of TP53, HIPK2 and AXIN1. Interacts with histone acetyltransferases EP300 and methyltransferases HRMT1L2 and CARM1, and recruits them to promoters. Interacts (via C-terminus) with TAF1; when TAF1 is part of the TFIID complex. Interacts with ING4; this interaction may be indirect. Found in a complex with CABLES1 and TP73. Interacts with HIPK1, HIPK2, and TP53INP1. Interacts with WWOX. Interacts with USP7 and SYVN1. Interacts with HSP90AB1. Interacts with CHD8; leading to recruit histone H1 and prevent transactivation activity. Interacts with ARMC10, BANP, CDKN2AIP, NUAK1, STK11/LKB1, UHRF2 and E4F. Interacts with YWHAZ; the interaction enhances TP53 transcriptional activity. Phosphorylation of YWHAZ on 'Ser-58' inhibits this interaction. Interacts (via DNA-binding domain) with MAML1 (via N-terminus). Interacts with MKRN1. Interacts with PML (via C-terminus). Interacts with MDM2; leading to ubiquitination and proteasomal degradation of TP53. Directly interacts with FBXO42; leading to ubiquitination and degradation of TP53. Interacts (phosphorylated at Ser-15 by ATM) with the phosphatase PP2A-PPP2R5C holoenzyme; regulates stress-induced TP53-dependent inhibition of cell proliferation. Interacts with PPP2R2A. Interacts with AURKA, DAXX, BRD7 and TRIM24. Interacts (when monomethylated at Lys-373) with L3MBTL1. Interacts with GRK5. Binds to the CAK complex (CDK7, cyclin H and MAT1) in response to DNA damage. Interacts with CDK5 in neurons. Interacts with AURKB, SETD2, UHRF2 and NOC2L. Interacts (via N-terminus) with PTK2/FAK1; this promotes ubiquitination by MDM2. Interacts with PTK2B/PYK2; this promotes ubiquitination by MDM2. Interacts with PRKCG. Interacts with PPIF; the association implicates preferentially tetrameric TP53, is induced by oxidative stress and is impaired by cyclosporin A (CsA). Interacts with SNAI1; the interaction induces SNAI1 degradation via MDM2-mediated ubiquitination and inhibits SNAI1-induced cell invasion. Interacts with UBC9. Interacts with ZNF385B; the interaction is direct. Interacts (via DNA-binding domain) with ZNF385A; the interaction is direct and enhances p53/TP53 transactivation functions on cell-cycle arrest target genes, resulting in growth arrest (By similarity). Interacts with ANKRD2. Interacts with RFFL and RNF34; involved in p53/TP53 ubiquitination. Interacts with MTA1 and COP1. Interacts with CCAR2 (via N-terminus). Interacts with MORC3. Interacts (via C-terminus) with POU4F2 (via C-terminus). Interacts (via oligomerization region) with NOP53; the interaction is direct and may prevent the MDM2-mediated proteasomal degradation of TP53. Interacts with AFG1L; mediates mitochondrial translocation of TP53. Interacts with UBD (By similarity). Interacts with TAF6 (By similarity). Interacts with C10orf90/FATS; the interaction inhibits binding of TP53 and MDM2 (By similarity). Interacts with NUPR1; interaction is stress-dependent. Forms a complex with EP300 and NUPR1; this complex binds CDKN1A promoter leading to transcriptional induction of CDKN1A (By similarity). Interacts with PRMT5 in response to DNA damage; the interaction is TTC5/STRAP dependent (By similarity). Interacts with PPP1R13L (via SH3 domain and ANK repeats); the interaction inhibits pro-apoptotic activity of p53/TP53 (By similarity). Interacts with PPP1R13B/ASPP1 and TP53BP2/ASPP2; the interactions promotes pro-apoptotic activity (By similarity). When phosphorylated at Ser-15, interacts with DDX3X and gamma-tubulin (By similarity). Interacts with KAT7/HBO1; leading to inhibit histone acetyltransferase activity of KAT7/HBO1 (By similarity). Interacts (via N-terminus) with E3 ubiquitin-protein ligase MUL1; the interaction results in ubiquitination of cytoplasmic TP53 at Lys-24 and subsequent proteasomal degradation (By similarity). Interacts with S100A4; this interaction promotes TP53 degradation (By similarity). Interacts with TTC5/STRAP; the interaction may result in increased mitochondrial-dependent apoptosis (By similarity). Interacts with NQO1; this interaction is NADH-dependent, stabilizes TP53 in response to oxidative stress and protects it from ubiquitin-independent degradation by the 20S proteasome (By similarity). Interacts with DAZAP2 at TP53 target gene promoters; the interaction is triggered by DNA damage and leads to modulation of the expression of a subset of TP53 target genes, reducing DNA damage-induced cell death by limiting the expression of cell death-mediating TP53 target genes (By similarity). Interacts (via N-terminus) with ZNF768 (via zinc-finger domains); interaction might be facilitated by TP53 oligomerization state (By similarity). Forms a ternary complex with ALDOB and G6PD; this interaction is direct. ALDOB stabilizes the complex inhibiting G6PD activity and keeping oxidative pentose phosphate metabolism in check. Interacts with HSPA9/MOT-2; the interaction promotes the degradation of TP53 (By similarity). Interacts with FBXO22; this interaction promotes TP53 proteasomal degradation (By similarity).</text>
</comment>
<comment type="subcellular location">
    <subcellularLocation>
        <location evidence="3">Cytoplasm</location>
    </subcellularLocation>
    <subcellularLocation>
        <location evidence="3">Nucleus</location>
    </subcellularLocation>
    <subcellularLocation>
        <location evidence="3">Nucleus</location>
        <location evidence="3">PML body</location>
    </subcellularLocation>
    <subcellularLocation>
        <location evidence="3">Endoplasmic reticulum</location>
    </subcellularLocation>
    <subcellularLocation>
        <location evidence="3">Mitochondrion matrix</location>
    </subcellularLocation>
    <subcellularLocation>
        <location evidence="3">Cytoplasm</location>
        <location evidence="3">Cytoskeleton</location>
        <location evidence="3">Microtubule organizing center</location>
        <location evidence="3">Centrosome</location>
    </subcellularLocation>
    <text evidence="3">Interaction with BANP promotes nuclear localization. Recruited into PML bodies together with CHEK2. Translocates to mitochondria upon oxidative stress. Translocates to mitochondria in response to mitomycin C treatment (By similarity). Competitive inhibition of TP53 interaction with HSPA9/MOT-2 by UBXN2A results in increased protein abundance and subsequent translocation of TP53 to the nucleus (By similarity).</text>
</comment>
<comment type="domain">
    <text evidence="3">The N-terminal and C-terminal disordered regions undergo liquid-liquid phase separation (LLPS) following homotetramerization and activation. Post-translational modifications, such as phosphorylation or lactylation affect the ability to undergo LLPS.</text>
</comment>
<comment type="domain">
    <text evidence="3">The nuclear export signal acts as a transcriptional repression domain. The TADI and TADII motifs (residues 17 to 25 and 48 to 56) correspond both to 9aaTAD motifs which are transactivation domains present in a large number of yeast and animal transcription factors.</text>
</comment>
<comment type="PTM">
    <text evidence="1 3">Phosphorylation on Ser residues mediates transcriptional activation. Phosphorylation at Ser-9 by HIPK4 increases repression activity on BIRC5 promoter (By similarity). Phosphorylated on Thr-18 by VRK1, which may prevent the interaction with MDM2. Phosphorylated on Ser-20 by CHEK2 in response to DNA damage, which prevents ubiquitination by MDM2. Phosphorylated on Ser-20 by PLK3 in response to reactive oxygen species (ROS), promoting p53/TP53-mediated apoptosis. Phosphorylated on Thr-55 by TAF1 which promotes MDM2-mediated TP53 degradation. Phosphorylated on Ser-33 by CDK7 in a CAK complex in response to DNA damage. Phosphorylated by HIPK1 (By similarity). Phosphorylated on Ser-46 by HIPK2 upon UV irradiation. Phosphorylation on Ser-46 is required for acetylation by CREBBP. Phosphorylated on Ser-392 following UV but not gamma irradiation. Stabilized by CDK5-mediated phosphorylation in response to genotoxic and oxidative stresses at Ser-15, Ser-33 and Ser-46, leading to accumulation of p53/TP53, particularly in the nucleus, thus inducing the transactivation of p53/TP53 target genes. Phosphorylated by DYRK2 at Ser-46 in response to genotoxic stress. Phosphorylated at Ser-315 and Ser-392 by CDK2 in response to DNA-damage (By similarity). Phosphorylation at Ser-15 is required for interaction with DDX3X and gamma-tubulin (By similarity). Phosphorylation at Ser-392 regulates its ability to undergo liquid-liquid phase separation by increasing fluidity of TP53/p53 condensates (By similarity).</text>
</comment>
<comment type="PTM">
    <text evidence="3">Monomethylated at Lys-372 by SETD7, leading to stabilization and increased transcriptional activation. Monomethylated at Lys-370 by SMYD2, leading to decreased DNA-binding activity and subsequent transcriptional regulation activity. Lys-372 monomethylation prevents interaction with SMYD2 and subsequent monomethylation at Lys-370. Dimethylated at Lys-373 by EHMT1 and EHMT2. Monomethylated at Lys-382 by KMT5A, promoting interaction with L3MBTL1 and leading to repress transcriptional activity. Demethylation of dimethylated Lys-370 by KDM1A prevents interaction with TP53BP1 and represses TP53-mediated transcriptional activation (By similarity). Monomethylated at Arg-333 and dimethylated at Arg-335 and Arg-337 by PRMT5; methylation is increased after DNA damage and might possibly affect TP53 target gene specificity (By similarity).</text>
</comment>
<comment type="PTM">
    <text evidence="1">Sumoylated with SUMO1. Sumoylated at Lys-386 by UBC9 (By similarity).</text>
</comment>
<comment type="PTM">
    <text evidence="2 3">Ubiquitinated by MDM2 and SYVN1, which leads to proteasomal degradation. Ubiquitinated by RFWD3, which works in cooperation with MDM2 and may catalyze the formation of short polyubiquitin chains on p53/TP53 that are not targeted to the proteasome. Ubiquitinated by MKRN1, which leads to proteasomal degradation. Deubiquitinated by USP10, leading to stabilize it. Ubiquitinated by TRIM24, RFFL, RNF34 and RNF125, which leads to proteasomal degradation. Ubiquitination by TOPORS induces degradation. Deubiquitination by USP7, leading to stabilize it. Ubiquitinated by COP1, which leads to proteasomal degradation (By similarity). Ubiquitination and subsequent proteasomal degradation is negatively regulated by CCAR2 (By similarity). Polyubiquitinated by C10orf90/FATS, polyubiquitination is 'Lys-48'-linkage independent and non-proteolytic, leading to TP53 stabilization (By similarity). Polyubiquitinated by MUL1 at Lys-24 which leads to proteasomal degradation (By similarity). Deubiquitinated by USP3, leading to stabilization (By similarity). Ubiquitinated by MSL2, promoting its cytoplasmic localization (By similarity). Also ubiquitinated by the SCF(FBXO22)-KDMA4A complex; leading to proteasomal degradation (By similarity).</text>
</comment>
<comment type="PTM">
    <text evidence="3">Acetylation of Lys-382 by CREBBP enhances transcriptional activity. Acetylation of Lys-382 by EP300. Deacetylation of Lys-382 by SIRT1 impairs its ability to induce proapoptotic program and modulate cell senescence. Deacetylation by SIRT2 impairs its ability to induce transcription activation in a AKT-dependent manner. Acetylated at Lys-120 by KAT5, KAT6A and KAT8; regulating its ability to induce proapoptotic program.</text>
</comment>
<comment type="PTM">
    <text evidence="3">Lactylation by AARS1 prevents ability to undergo liquid-liquid phase separation (LLPS), thereby inhibiting transcription factor activity.</text>
</comment>
<comment type="disease">
    <text>p53 is found in increased amounts in a wide variety of transformed cells. p53 is frequently mutated or inactivated in many types of cancer.</text>
</comment>
<comment type="similarity">
    <text evidence="6">Belongs to the p53 family.</text>
</comment>